<keyword id="KW-1204">Blood coagulation cascade activating toxin</keyword>
<keyword id="KW-0903">Direct protein sequencing</keyword>
<keyword id="KW-1199">Hemostasis impairing toxin</keyword>
<keyword id="KW-0378">Hydrolase</keyword>
<keyword id="KW-0645">Protease</keyword>
<keyword id="KW-0964">Secreted</keyword>
<keyword id="KW-0720">Serine protease</keyword>
<keyword id="KW-0800">Toxin</keyword>
<organism>
    <name type="scientific">Cerastes cerastes</name>
    <name type="common">Horned desert viper</name>
    <dbReference type="NCBI Taxonomy" id="8697"/>
    <lineage>
        <taxon>Eukaryota</taxon>
        <taxon>Metazoa</taxon>
        <taxon>Chordata</taxon>
        <taxon>Craniata</taxon>
        <taxon>Vertebrata</taxon>
        <taxon>Euteleostomi</taxon>
        <taxon>Lepidosauria</taxon>
        <taxon>Squamata</taxon>
        <taxon>Bifurcata</taxon>
        <taxon>Unidentata</taxon>
        <taxon>Episquamata</taxon>
        <taxon>Toxicofera</taxon>
        <taxon>Serpentes</taxon>
        <taxon>Colubroidea</taxon>
        <taxon>Viperidae</taxon>
        <taxon>Viperinae</taxon>
        <taxon>Cerastes</taxon>
    </lineage>
</organism>
<reference key="1">
    <citation type="journal article" date="1992" name="Toxicon">
        <title>A fibrinogen-clotting serine proteinase from Cerastes cerastes (horned viper) venom with arginine-esterase and amidase activities. Purification, characterization and kinetic parameter determination.</title>
        <authorList>
            <person name="Laraba-Djebari F."/>
            <person name="Martin-Eauclaire M.-F."/>
            <person name="Marchot P."/>
        </authorList>
    </citation>
    <scope>PROTEIN SEQUENCE</scope>
    <scope>FUNCTION</scope>
    <scope>BIOPHYSICOCHEMICAL PROPERTIES</scope>
    <scope>SUBUNIT</scope>
    <source>
        <tissue>Venom</tissue>
    </source>
</reference>
<comment type="function">
    <text evidence="2">Thrombin-like snake venom serine protease that displays clotting activity on fibrinogen. Shows both arginine-ester hydrolase and amidase activities on synthetic substrates. Also shows proteolytic activity toward casein.</text>
</comment>
<comment type="catalytic activity">
    <reaction>
        <text>Selective cleavage of Arg-|-Xaa bond in fibrinogen, to form fibrin, and release fibrinopeptide A. The specificity of further degradation of fibrinogen varies with species origin of the enzyme.</text>
        <dbReference type="EC" id="3.4.21.74"/>
    </reaction>
</comment>
<comment type="biophysicochemical properties">
    <kinetics>
        <KM evidence="2">65 nM for CBS 34-47</KM>
    </kinetics>
</comment>
<comment type="subunit">
    <text evidence="2">Homodimer.</text>
</comment>
<comment type="subcellular location">
    <subcellularLocation>
        <location>Secreted</location>
    </subcellularLocation>
</comment>
<comment type="tissue specificity">
    <text>Expressed by the venom gland.</text>
</comment>
<comment type="similarity">
    <text evidence="1">Belongs to the peptidase S1 family. Snake venom subfamily.</text>
</comment>
<sequence length="33" mass="3786">VIGGDEXDINEHRSLALMYXSWSHRFIXXGXLI</sequence>
<evidence type="ECO:0000255" key="1">
    <source>
        <dbReference type="PROSITE-ProRule" id="PRU00274"/>
    </source>
</evidence>
<evidence type="ECO:0000269" key="2">
    <source>
    </source>
</evidence>
<accession>Q9PS28</accession>
<proteinExistence type="evidence at protein level"/>
<feature type="chain" id="PRO_0000294991" description="Thrombin-like enzyme RP34">
    <location>
        <begin position="1"/>
        <end position="33" status="greater than"/>
    </location>
</feature>
<feature type="domain" description="Peptidase S1" evidence="1">
    <location>
        <begin position="1"/>
        <end position="33" status="greater than"/>
    </location>
</feature>
<feature type="non-terminal residue">
    <location>
        <position position="33"/>
    </location>
</feature>
<dbReference type="EC" id="3.4.21.74"/>
<dbReference type="PIR" id="A44181">
    <property type="entry name" value="A44181"/>
</dbReference>
<dbReference type="SABIO-RK" id="Q9PS28"/>
<dbReference type="GO" id="GO:0005576">
    <property type="term" value="C:extracellular region"/>
    <property type="evidence" value="ECO:0007669"/>
    <property type="project" value="UniProtKB-SubCell"/>
</dbReference>
<dbReference type="GO" id="GO:0008236">
    <property type="term" value="F:serine-type peptidase activity"/>
    <property type="evidence" value="ECO:0007669"/>
    <property type="project" value="UniProtKB-KW"/>
</dbReference>
<dbReference type="GO" id="GO:0090729">
    <property type="term" value="F:toxin activity"/>
    <property type="evidence" value="ECO:0007669"/>
    <property type="project" value="UniProtKB-KW"/>
</dbReference>
<dbReference type="GO" id="GO:0006508">
    <property type="term" value="P:proteolysis"/>
    <property type="evidence" value="ECO:0007669"/>
    <property type="project" value="UniProtKB-KW"/>
</dbReference>
<protein>
    <recommendedName>
        <fullName>Thrombin-like enzyme RP34</fullName>
        <shortName>SVTLE</shortName>
        <ecNumber>3.4.21.74</ecNumber>
    </recommendedName>
    <alternativeName>
        <fullName>Fibrinogen-clotting enzyme</fullName>
    </alternativeName>
    <alternativeName>
        <fullName>Snake venom serine protease</fullName>
        <shortName>SVSP</shortName>
    </alternativeName>
    <alternativeName>
        <fullName>Venombin A</fullName>
    </alternativeName>
</protein>
<name>VSPF_CERCE</name>